<evidence type="ECO:0000250" key="1">
    <source>
        <dbReference type="UniProtKB" id="Q15760"/>
    </source>
</evidence>
<evidence type="ECO:0000250" key="2">
    <source>
        <dbReference type="UniProtKB" id="Q61121"/>
    </source>
</evidence>
<evidence type="ECO:0000255" key="3"/>
<evidence type="ECO:0000255" key="4">
    <source>
        <dbReference type="PROSITE-ProRule" id="PRU00521"/>
    </source>
</evidence>
<evidence type="ECO:0000269" key="5">
    <source>
    </source>
</evidence>
<evidence type="ECO:0000269" key="6">
    <source>
    </source>
</evidence>
<evidence type="ECO:0000305" key="7"/>
<sequence>MGFDHRMETDQPPVVTATLLVPLQNGSCVEAAEALLPHGLMELHEEHSWMSNRTDLQYELNPGEVATASIFFGALWLFSIFGNSLVCLVIHRSRRTQSTTNYFVVSMACADLLISVASTPFVVLQFTTGRWTLGSAMCKVVRYFQYLTPGVQIYVLLSICIDRFYTIVYPLSFKVSREKAKRMIAASWILDAAFVTPVFFFYGSNWDSHCNYFLPPSWEGTAYTVIHFLVGFVIPSVLIILFYQKVIKYIWRIGTDGRTLRRTMNIVPRTKVKTVKMFLLLNLVFLFSWLPFHVAQLWHPHEQDYRKSSLVFTAVTWVSFSSSASKPTLYSIYNANFRRGMKETFCMSSMKCYRSNAYTITTSSRMAKRNYVGISEIPPVSRTITKDSIYDSFDREAREKKLAWPINSNPPNTFV</sequence>
<proteinExistence type="evidence at transcript level"/>
<keyword id="KW-1003">Cell membrane</keyword>
<keyword id="KW-1015">Disulfide bond</keyword>
<keyword id="KW-0297">G-protein coupled receptor</keyword>
<keyword id="KW-0325">Glycoprotein</keyword>
<keyword id="KW-0472">Membrane</keyword>
<keyword id="KW-0675">Receptor</keyword>
<keyword id="KW-1185">Reference proteome</keyword>
<keyword id="KW-0807">Transducer</keyword>
<keyword id="KW-0812">Transmembrane</keyword>
<keyword id="KW-1133">Transmembrane helix</keyword>
<organism>
    <name type="scientific">Rattus norvegicus</name>
    <name type="common">Rat</name>
    <dbReference type="NCBI Taxonomy" id="10116"/>
    <lineage>
        <taxon>Eukaryota</taxon>
        <taxon>Metazoa</taxon>
        <taxon>Chordata</taxon>
        <taxon>Craniata</taxon>
        <taxon>Vertebrata</taxon>
        <taxon>Euteleostomi</taxon>
        <taxon>Mammalia</taxon>
        <taxon>Eutheria</taxon>
        <taxon>Euarchontoglires</taxon>
        <taxon>Glires</taxon>
        <taxon>Rodentia</taxon>
        <taxon>Myomorpha</taxon>
        <taxon>Muroidea</taxon>
        <taxon>Muridae</taxon>
        <taxon>Murinae</taxon>
        <taxon>Rattus</taxon>
    </lineage>
</organism>
<name>GPR19_RAT</name>
<protein>
    <recommendedName>
        <fullName>Probable G-protein coupled receptor 19</fullName>
    </recommendedName>
</protein>
<gene>
    <name type="primary">Gpr19</name>
</gene>
<comment type="function">
    <text evidence="1 2 5 6">G-protein coupled receptor that plays a role in the regulation of circadian rhythms and energy metabolism (PubMed:26739651). Participates in maintaining proper circadian gene expression in the suprachiasmatic nucleus (SCN), the locus of the master circadian clock in the brain (By similarity). May function as a coordinator of aging-associated metabolic dysfunction, stress response, DNA integrity management, and eventual senescence (By similarity). Upon binding to adropin, modulates mitochondrial energy metabolism via the p44/42-PDK4 signaling pathway, influencing pyruvate dehydrogenase activity (PubMed:29909017).</text>
</comment>
<comment type="subcellular location">
    <subcellularLocation>
        <location>Cell membrane</location>
        <topology>Multi-pass membrane protein</topology>
    </subcellularLocation>
</comment>
<comment type="tissue specificity">
    <text evidence="5">Abundant expression in the brain.</text>
</comment>
<comment type="similarity">
    <text evidence="4">Belongs to the G-protein coupled receptor 1 family.</text>
</comment>
<accession>P70585</accession>
<accession>Q5FVI1</accession>
<feature type="chain" id="PRO_0000069540" description="Probable G-protein coupled receptor 19">
    <location>
        <begin position="1"/>
        <end position="415"/>
    </location>
</feature>
<feature type="topological domain" description="Extracellular" evidence="3">
    <location>
        <begin position="1"/>
        <end position="69"/>
    </location>
</feature>
<feature type="transmembrane region" description="Helical; Name=1" evidence="3">
    <location>
        <begin position="70"/>
        <end position="90"/>
    </location>
</feature>
<feature type="topological domain" description="Cytoplasmic" evidence="3">
    <location>
        <begin position="91"/>
        <end position="102"/>
    </location>
</feature>
<feature type="transmembrane region" description="Helical; Name=2" evidence="3">
    <location>
        <begin position="103"/>
        <end position="123"/>
    </location>
</feature>
<feature type="topological domain" description="Extracellular" evidence="3">
    <location>
        <begin position="124"/>
        <end position="152"/>
    </location>
</feature>
<feature type="transmembrane region" description="Helical; Name=3" evidence="3">
    <location>
        <begin position="153"/>
        <end position="173"/>
    </location>
</feature>
<feature type="topological domain" description="Cytoplasmic" evidence="3">
    <location>
        <begin position="174"/>
        <end position="182"/>
    </location>
</feature>
<feature type="transmembrane region" description="Helical; Name=4" evidence="3">
    <location>
        <begin position="183"/>
        <end position="203"/>
    </location>
</feature>
<feature type="topological domain" description="Extracellular" evidence="3">
    <location>
        <begin position="204"/>
        <end position="221"/>
    </location>
</feature>
<feature type="transmembrane region" description="Helical; Name=5" evidence="3">
    <location>
        <begin position="222"/>
        <end position="242"/>
    </location>
</feature>
<feature type="topological domain" description="Cytoplasmic" evidence="3">
    <location>
        <begin position="243"/>
        <end position="277"/>
    </location>
</feature>
<feature type="transmembrane region" description="Helical; Name=6" evidence="3">
    <location>
        <begin position="278"/>
        <end position="298"/>
    </location>
</feature>
<feature type="topological domain" description="Extracellular" evidence="3">
    <location>
        <begin position="299"/>
        <end position="309"/>
    </location>
</feature>
<feature type="transmembrane region" description="Helical; Name=7" evidence="3">
    <location>
        <begin position="310"/>
        <end position="332"/>
    </location>
</feature>
<feature type="topological domain" description="Cytoplasmic" evidence="3">
    <location>
        <begin position="333"/>
        <end position="415"/>
    </location>
</feature>
<feature type="glycosylation site" description="N-linked (GlcNAc...) asparagine" evidence="3">
    <location>
        <position position="25"/>
    </location>
</feature>
<feature type="glycosylation site" description="N-linked (GlcNAc...) asparagine" evidence="3">
    <location>
        <position position="52"/>
    </location>
</feature>
<feature type="disulfide bond" evidence="4">
    <location>
        <begin position="138"/>
        <end position="210"/>
    </location>
</feature>
<feature type="sequence conflict" description="In Ref. 2; AAB49752." evidence="7" ref="2">
    <original>H</original>
    <variation>S</variation>
    <location>
        <position position="44"/>
    </location>
</feature>
<feature type="sequence conflict" description="In Ref. 2; AAB49752." evidence="7" ref="2">
    <original>F</original>
    <variation>L</variation>
    <location>
        <position position="103"/>
    </location>
</feature>
<feature type="sequence conflict" description="In Ref. 2; AAB49752." evidence="7" ref="2">
    <original>L</original>
    <variation>F</variation>
    <location>
        <position position="281"/>
    </location>
</feature>
<feature type="sequence conflict" description="In Ref. 2; AAB49752." evidence="7" ref="2">
    <original>D</original>
    <variation>E</variation>
    <location>
        <position position="304"/>
    </location>
</feature>
<feature type="sequence conflict" description="In Ref. 2; AAB49752." evidence="7" ref="2">
    <original>F</original>
    <variation>L</variation>
    <location>
        <position position="393"/>
    </location>
</feature>
<dbReference type="EMBL" id="BC089971">
    <property type="protein sequence ID" value="AAH89971.1"/>
    <property type="molecule type" value="mRNA"/>
</dbReference>
<dbReference type="EMBL" id="U65417">
    <property type="protein sequence ID" value="AAB49752.1"/>
    <property type="molecule type" value="Genomic_DNA"/>
</dbReference>
<dbReference type="PIR" id="S74238">
    <property type="entry name" value="S74238"/>
</dbReference>
<dbReference type="RefSeq" id="NP_542146.1">
    <property type="nucleotide sequence ID" value="NM_080579.2"/>
</dbReference>
<dbReference type="RefSeq" id="XP_006237586.1">
    <property type="nucleotide sequence ID" value="XM_006237524.4"/>
</dbReference>
<dbReference type="RefSeq" id="XP_017448148.1">
    <property type="nucleotide sequence ID" value="XM_017592659.1"/>
</dbReference>
<dbReference type="RefSeq" id="XP_017448149.1">
    <property type="nucleotide sequence ID" value="XM_017592660.1"/>
</dbReference>
<dbReference type="RefSeq" id="XP_017448150.1">
    <property type="nucleotide sequence ID" value="XM_017592661.1"/>
</dbReference>
<dbReference type="RefSeq" id="XP_017448151.1">
    <property type="nucleotide sequence ID" value="XM_017592662.1"/>
</dbReference>
<dbReference type="SMR" id="P70585"/>
<dbReference type="FunCoup" id="P70585">
    <property type="interactions" value="623"/>
</dbReference>
<dbReference type="STRING" id="10116.ENSRNOP00000009341"/>
<dbReference type="GlyCosmos" id="P70585">
    <property type="glycosylation" value="2 sites, No reported glycans"/>
</dbReference>
<dbReference type="GlyGen" id="P70585">
    <property type="glycosylation" value="2 sites"/>
</dbReference>
<dbReference type="iPTMnet" id="P70585"/>
<dbReference type="PhosphoSitePlus" id="P70585"/>
<dbReference type="PaxDb" id="10116-ENSRNOP00000009341"/>
<dbReference type="Ensembl" id="ENSRNOT00000009341.6">
    <property type="protein sequence ID" value="ENSRNOP00000009341.4"/>
    <property type="gene ID" value="ENSRNOG00000007126.6"/>
</dbReference>
<dbReference type="Ensembl" id="ENSRNOT00000095765.1">
    <property type="protein sequence ID" value="ENSRNOP00000093658.1"/>
    <property type="gene ID" value="ENSRNOG00000007126.6"/>
</dbReference>
<dbReference type="Ensembl" id="ENSRNOT00000116148.1">
    <property type="protein sequence ID" value="ENSRNOP00000085068.1"/>
    <property type="gene ID" value="ENSRNOG00000007126.6"/>
</dbReference>
<dbReference type="GeneID" id="312787"/>
<dbReference type="KEGG" id="rno:312787"/>
<dbReference type="UCSC" id="RGD:71045">
    <property type="organism name" value="rat"/>
</dbReference>
<dbReference type="AGR" id="RGD:71045"/>
<dbReference type="CTD" id="2842"/>
<dbReference type="RGD" id="71045">
    <property type="gene designation" value="Gpr19"/>
</dbReference>
<dbReference type="eggNOG" id="KOG3656">
    <property type="taxonomic scope" value="Eukaryota"/>
</dbReference>
<dbReference type="GeneTree" id="ENSGT00940000160365"/>
<dbReference type="HOGENOM" id="CLU_009579_20_0_1"/>
<dbReference type="InParanoid" id="P70585"/>
<dbReference type="OMA" id="QLWHPRE"/>
<dbReference type="OrthoDB" id="5965754at2759"/>
<dbReference type="PhylomeDB" id="P70585"/>
<dbReference type="TreeFam" id="TF331630"/>
<dbReference type="PRO" id="PR:P70585"/>
<dbReference type="Proteomes" id="UP000002494">
    <property type="component" value="Chromosome 4"/>
</dbReference>
<dbReference type="Bgee" id="ENSRNOG00000007126">
    <property type="expression patterns" value="Expressed in thymus and 20 other cell types or tissues"/>
</dbReference>
<dbReference type="GO" id="GO:0005929">
    <property type="term" value="C:cilium"/>
    <property type="evidence" value="ECO:0000266"/>
    <property type="project" value="RGD"/>
</dbReference>
<dbReference type="GO" id="GO:0043005">
    <property type="term" value="C:neuron projection"/>
    <property type="evidence" value="ECO:0000266"/>
    <property type="project" value="RGD"/>
</dbReference>
<dbReference type="GO" id="GO:0005886">
    <property type="term" value="C:plasma membrane"/>
    <property type="evidence" value="ECO:0000318"/>
    <property type="project" value="GO_Central"/>
</dbReference>
<dbReference type="GO" id="GO:0004930">
    <property type="term" value="F:G protein-coupled receptor activity"/>
    <property type="evidence" value="ECO:0000318"/>
    <property type="project" value="GO_Central"/>
</dbReference>
<dbReference type="GO" id="GO:0007186">
    <property type="term" value="P:G protein-coupled receptor signaling pathway"/>
    <property type="evidence" value="ECO:0000318"/>
    <property type="project" value="GO_Central"/>
</dbReference>
<dbReference type="CDD" id="cd15008">
    <property type="entry name" value="7tmA_GPR19"/>
    <property type="match status" value="1"/>
</dbReference>
<dbReference type="FunFam" id="1.20.1070.10:FF:000165">
    <property type="entry name" value="Probable G-protein coupled receptor 19"/>
    <property type="match status" value="1"/>
</dbReference>
<dbReference type="Gene3D" id="1.20.1070.10">
    <property type="entry name" value="Rhodopsin 7-helix transmembrane proteins"/>
    <property type="match status" value="1"/>
</dbReference>
<dbReference type="InterPro" id="IPR000276">
    <property type="entry name" value="GPCR_Rhodpsn"/>
</dbReference>
<dbReference type="InterPro" id="IPR017452">
    <property type="entry name" value="GPCR_Rhodpsn_7TM"/>
</dbReference>
<dbReference type="InterPro" id="IPR047829">
    <property type="entry name" value="GPR19_7tmA"/>
</dbReference>
<dbReference type="PANTHER" id="PTHR24243">
    <property type="entry name" value="G-PROTEIN COUPLED RECEPTOR"/>
    <property type="match status" value="1"/>
</dbReference>
<dbReference type="PANTHER" id="PTHR24243:SF224">
    <property type="entry name" value="G-PROTEIN COUPLED RECEPTOR 19-RELATED"/>
    <property type="match status" value="1"/>
</dbReference>
<dbReference type="Pfam" id="PF00001">
    <property type="entry name" value="7tm_1"/>
    <property type="match status" value="1"/>
</dbReference>
<dbReference type="PRINTS" id="PR00237">
    <property type="entry name" value="GPCRRHODOPSN"/>
</dbReference>
<dbReference type="SUPFAM" id="SSF81321">
    <property type="entry name" value="Family A G protein-coupled receptor-like"/>
    <property type="match status" value="1"/>
</dbReference>
<dbReference type="PROSITE" id="PS50262">
    <property type="entry name" value="G_PROTEIN_RECEP_F1_2"/>
    <property type="match status" value="1"/>
</dbReference>
<reference key="1">
    <citation type="journal article" date="2004" name="Genome Res.">
        <title>The status, quality, and expansion of the NIH full-length cDNA project: the Mammalian Gene Collection (MGC).</title>
        <authorList>
            <consortium name="The MGC Project Team"/>
        </authorList>
    </citation>
    <scope>NUCLEOTIDE SEQUENCE [LARGE SCALE MRNA]</scope>
    <source>
        <tissue>Brain</tissue>
    </source>
</reference>
<reference key="2">
    <citation type="journal article" date="1996" name="FEBS Lett.">
        <title>A novel gene codes for a putative G protein-coupled receptor with an abundant expression in brain.</title>
        <authorList>
            <person name="O'Dowd B.F."/>
            <person name="Nguyen T."/>
            <person name="Lynch K.R."/>
            <person name="Kolakowski L.F. Jr."/>
            <person name="Thompson M."/>
            <person name="Cheng R."/>
            <person name="Marchese A."/>
            <person name="Ng G.Y.K."/>
            <person name="Heng H.H.Q."/>
            <person name="George S.R."/>
        </authorList>
    </citation>
    <scope>NUCLEOTIDE SEQUENCE [GENOMIC DNA] OF 42-393</scope>
</reference>
<reference key="3">
    <citation type="journal article" date="2016" name="Am. J. Physiol.">
        <title>Adropin acts in brain to inhibit water drinking: potential interaction with the orphan G protein-coupled receptor, GPR19.</title>
        <authorList>
            <person name="Stein L.M."/>
            <person name="Yosten G.L."/>
            <person name="Samson W.K."/>
        </authorList>
    </citation>
    <scope>FUNCTION</scope>
    <scope>TISSUE SPECIFICITY</scope>
</reference>
<reference key="4">
    <citation type="journal article" date="2018" name="Redox Biol.">
        <title>Adropin regulates pyruvate dehydrogenase in cardiac cells via a novel GPCR-MAPK-PDK4 signaling pathway.</title>
        <authorList>
            <person name="Thapa D."/>
            <person name="Stoner M.W."/>
            <person name="Zhang M."/>
            <person name="Xie B."/>
            <person name="Manning J.R."/>
            <person name="Guimaraes D."/>
            <person name="Shiva S."/>
            <person name="Jurczak M.J."/>
            <person name="Scott I."/>
        </authorList>
    </citation>
    <scope>FUNCTION</scope>
</reference>